<organism>
    <name type="scientific">Cryptococcus neoformans var. neoformans serotype D (strain B-3501A)</name>
    <name type="common">Filobasidiella neoformans</name>
    <dbReference type="NCBI Taxonomy" id="283643"/>
    <lineage>
        <taxon>Eukaryota</taxon>
        <taxon>Fungi</taxon>
        <taxon>Dikarya</taxon>
        <taxon>Basidiomycota</taxon>
        <taxon>Agaricomycotina</taxon>
        <taxon>Tremellomycetes</taxon>
        <taxon>Tremellales</taxon>
        <taxon>Cryptococcaceae</taxon>
        <taxon>Cryptococcus</taxon>
        <taxon>Cryptococcus neoformans species complex</taxon>
    </lineage>
</organism>
<feature type="chain" id="PRO_0000410231" description="Ras-like protein">
    <location>
        <begin position="1"/>
        <end position="213"/>
    </location>
</feature>
<feature type="propeptide" id="PRO_0000410232" description="Removed in mature form" evidence="1">
    <location>
        <begin position="214"/>
        <end position="216"/>
    </location>
</feature>
<feature type="short sequence motif" description="Effector region">
    <location>
        <begin position="38"/>
        <end position="46"/>
    </location>
</feature>
<feature type="binding site" evidence="1">
    <location>
        <begin position="16"/>
        <end position="23"/>
    </location>
    <ligand>
        <name>GTP</name>
        <dbReference type="ChEBI" id="CHEBI:37565"/>
    </ligand>
</feature>
<feature type="binding site" evidence="1">
    <location>
        <begin position="63"/>
        <end position="67"/>
    </location>
    <ligand>
        <name>GTP</name>
        <dbReference type="ChEBI" id="CHEBI:37565"/>
    </ligand>
</feature>
<feature type="binding site" evidence="1">
    <location>
        <begin position="122"/>
        <end position="125"/>
    </location>
    <ligand>
        <name>GTP</name>
        <dbReference type="ChEBI" id="CHEBI:37565"/>
    </ligand>
</feature>
<feature type="modified residue" description="Cysteine methyl ester" evidence="1">
    <location>
        <position position="213"/>
    </location>
</feature>
<feature type="lipid moiety-binding region" description="S-palmitoyl cysteine" evidence="1">
    <location>
        <position position="209"/>
    </location>
</feature>
<feature type="lipid moiety-binding region" description="S-palmitoyl cysteine" evidence="1">
    <location>
        <position position="210"/>
    </location>
</feature>
<feature type="lipid moiety-binding region" description="S-geranylgeranyl cysteine" evidence="1">
    <location>
        <position position="213"/>
    </location>
</feature>
<gene>
    <name type="primary">RAS1</name>
    <name type="synonym">RAS</name>
    <name type="ordered locus">CNBA2670</name>
</gene>
<name>RAS_CRYNB</name>
<keyword id="KW-1003">Cell membrane</keyword>
<keyword id="KW-0342">GTP-binding</keyword>
<keyword id="KW-0378">Hydrolase</keyword>
<keyword id="KW-0449">Lipoprotein</keyword>
<keyword id="KW-0472">Membrane</keyword>
<keyword id="KW-0488">Methylation</keyword>
<keyword id="KW-0547">Nucleotide-binding</keyword>
<keyword id="KW-0564">Palmitate</keyword>
<keyword id="KW-0636">Prenylation</keyword>
<proteinExistence type="inferred from homology"/>
<dbReference type="EC" id="3.6.5.2" evidence="2"/>
<dbReference type="EMBL" id="AAEY01000001">
    <property type="protein sequence ID" value="EAL23620.1"/>
    <property type="molecule type" value="Genomic_DNA"/>
</dbReference>
<dbReference type="RefSeq" id="XP_778267.1">
    <property type="nucleotide sequence ID" value="XM_773174.1"/>
</dbReference>
<dbReference type="SMR" id="P0CQ43"/>
<dbReference type="EnsemblFungi" id="AAW40866">
    <property type="protein sequence ID" value="AAW40866"/>
    <property type="gene ID" value="CNA02810"/>
</dbReference>
<dbReference type="GeneID" id="4933521"/>
<dbReference type="KEGG" id="cnb:CNBA2670"/>
<dbReference type="VEuPathDB" id="FungiDB:CNBA2670"/>
<dbReference type="HOGENOM" id="CLU_041217_9_0_1"/>
<dbReference type="OrthoDB" id="2061at5206"/>
<dbReference type="GO" id="GO:0005886">
    <property type="term" value="C:plasma membrane"/>
    <property type="evidence" value="ECO:0007669"/>
    <property type="project" value="UniProtKB-SubCell"/>
</dbReference>
<dbReference type="GO" id="GO:0003925">
    <property type="term" value="F:G protein activity"/>
    <property type="evidence" value="ECO:0007669"/>
    <property type="project" value="UniProtKB-EC"/>
</dbReference>
<dbReference type="GO" id="GO:0005525">
    <property type="term" value="F:GTP binding"/>
    <property type="evidence" value="ECO:0007669"/>
    <property type="project" value="UniProtKB-KW"/>
</dbReference>
<dbReference type="GO" id="GO:0007165">
    <property type="term" value="P:signal transduction"/>
    <property type="evidence" value="ECO:0007669"/>
    <property type="project" value="InterPro"/>
</dbReference>
<dbReference type="FunFam" id="3.40.50.300:FF:000080">
    <property type="entry name" value="Ras-like GTPase Ras1"/>
    <property type="match status" value="1"/>
</dbReference>
<dbReference type="Gene3D" id="3.40.50.300">
    <property type="entry name" value="P-loop containing nucleotide triphosphate hydrolases"/>
    <property type="match status" value="1"/>
</dbReference>
<dbReference type="InterPro" id="IPR027417">
    <property type="entry name" value="P-loop_NTPase"/>
</dbReference>
<dbReference type="InterPro" id="IPR005225">
    <property type="entry name" value="Small_GTP-bd"/>
</dbReference>
<dbReference type="InterPro" id="IPR001806">
    <property type="entry name" value="Small_GTPase"/>
</dbReference>
<dbReference type="InterPro" id="IPR020849">
    <property type="entry name" value="Small_GTPase_Ras-type"/>
</dbReference>
<dbReference type="NCBIfam" id="TIGR00231">
    <property type="entry name" value="small_GTP"/>
    <property type="match status" value="1"/>
</dbReference>
<dbReference type="PANTHER" id="PTHR24070">
    <property type="entry name" value="RAS, DI-RAS, AND RHEB FAMILY MEMBERS OF SMALL GTPASE SUPERFAMILY"/>
    <property type="match status" value="1"/>
</dbReference>
<dbReference type="Pfam" id="PF00071">
    <property type="entry name" value="Ras"/>
    <property type="match status" value="1"/>
</dbReference>
<dbReference type="PRINTS" id="PR00449">
    <property type="entry name" value="RASTRNSFRMNG"/>
</dbReference>
<dbReference type="SMART" id="SM00175">
    <property type="entry name" value="RAB"/>
    <property type="match status" value="1"/>
</dbReference>
<dbReference type="SMART" id="SM00176">
    <property type="entry name" value="RAN"/>
    <property type="match status" value="1"/>
</dbReference>
<dbReference type="SMART" id="SM00173">
    <property type="entry name" value="RAS"/>
    <property type="match status" value="1"/>
</dbReference>
<dbReference type="SMART" id="SM00174">
    <property type="entry name" value="RHO"/>
    <property type="match status" value="1"/>
</dbReference>
<dbReference type="SUPFAM" id="SSF52540">
    <property type="entry name" value="P-loop containing nucleoside triphosphate hydrolases"/>
    <property type="match status" value="1"/>
</dbReference>
<dbReference type="PROSITE" id="PS51421">
    <property type="entry name" value="RAS"/>
    <property type="match status" value="1"/>
</dbReference>
<comment type="catalytic activity">
    <reaction evidence="2">
        <text>GTP + H2O = GDP + phosphate + H(+)</text>
        <dbReference type="Rhea" id="RHEA:19669"/>
        <dbReference type="ChEBI" id="CHEBI:15377"/>
        <dbReference type="ChEBI" id="CHEBI:15378"/>
        <dbReference type="ChEBI" id="CHEBI:37565"/>
        <dbReference type="ChEBI" id="CHEBI:43474"/>
        <dbReference type="ChEBI" id="CHEBI:58189"/>
        <dbReference type="EC" id="3.6.5.2"/>
    </reaction>
</comment>
<comment type="activity regulation">
    <text>Alternates between an inactive form bound to GDP and an active form bound to GTP. Activated by a guanine nucleotide-exchange factor (GEF) and inactivated by a GTPase-activating protein (GAP).</text>
</comment>
<comment type="subcellular location">
    <subcellularLocation>
        <location evidence="3">Cell membrane</location>
        <topology evidence="3">Lipid-anchor</topology>
        <orientation evidence="3">Cytoplasmic side</orientation>
    </subcellularLocation>
</comment>
<comment type="similarity">
    <text evidence="3">Belongs to the small GTPase superfamily. Ras family.</text>
</comment>
<accession>P0CQ43</accession>
<accession>O74650</accession>
<accession>Q560H3</accession>
<accession>Q5KPH2</accession>
<accession>Q9HFU0</accession>
<evidence type="ECO:0000250" key="1"/>
<evidence type="ECO:0000250" key="2">
    <source>
        <dbReference type="UniProtKB" id="P01112"/>
    </source>
</evidence>
<evidence type="ECO:0000305" key="3"/>
<protein>
    <recommendedName>
        <fullName>Ras-like protein</fullName>
        <ecNumber evidence="2">3.6.5.2</ecNumber>
    </recommendedName>
</protein>
<reference key="1">
    <citation type="journal article" date="2005" name="Science">
        <title>The genome of the basidiomycetous yeast and human pathogen Cryptococcus neoformans.</title>
        <authorList>
            <person name="Loftus B.J."/>
            <person name="Fung E."/>
            <person name="Roncaglia P."/>
            <person name="Rowley D."/>
            <person name="Amedeo P."/>
            <person name="Bruno D."/>
            <person name="Vamathevan J."/>
            <person name="Miranda M."/>
            <person name="Anderson I.J."/>
            <person name="Fraser J.A."/>
            <person name="Allen J.E."/>
            <person name="Bosdet I.E."/>
            <person name="Brent M.R."/>
            <person name="Chiu R."/>
            <person name="Doering T.L."/>
            <person name="Donlin M.J."/>
            <person name="D'Souza C.A."/>
            <person name="Fox D.S."/>
            <person name="Grinberg V."/>
            <person name="Fu J."/>
            <person name="Fukushima M."/>
            <person name="Haas B.J."/>
            <person name="Huang J.C."/>
            <person name="Janbon G."/>
            <person name="Jones S.J.M."/>
            <person name="Koo H.L."/>
            <person name="Krzywinski M.I."/>
            <person name="Kwon-Chung K.J."/>
            <person name="Lengeler K.B."/>
            <person name="Maiti R."/>
            <person name="Marra M.A."/>
            <person name="Marra R.E."/>
            <person name="Mathewson C.A."/>
            <person name="Mitchell T.G."/>
            <person name="Pertea M."/>
            <person name="Riggs F.R."/>
            <person name="Salzberg S.L."/>
            <person name="Schein J.E."/>
            <person name="Shvartsbeyn A."/>
            <person name="Shin H."/>
            <person name="Shumway M."/>
            <person name="Specht C.A."/>
            <person name="Suh B.B."/>
            <person name="Tenney A."/>
            <person name="Utterback T.R."/>
            <person name="Wickes B.L."/>
            <person name="Wortman J.R."/>
            <person name="Wye N.H."/>
            <person name="Kronstad J.W."/>
            <person name="Lodge J.K."/>
            <person name="Heitman J."/>
            <person name="Davis R.W."/>
            <person name="Fraser C.M."/>
            <person name="Hyman R.W."/>
        </authorList>
    </citation>
    <scope>NUCLEOTIDE SEQUENCE [LARGE SCALE GENOMIC DNA]</scope>
    <source>
        <strain>B-3501A</strain>
    </source>
</reference>
<sequence>MSKAQFLREYKLVVVGGGGVGKSALTIQFIQSHFVDEYDPTIEDSYRKQCIIDEEVALLDVLDTAGQEEYGAMREQYMRTGEGFLLVYSITSRSSFEEVSTFHQQILRVKDKDYFPVVVVANKCDLEYERQVQPHEGRDLAKRFNAQCIETSAKQRVNVDEAFIAVVRAIRRYQKESGPPQAVNAPAKSQMSAVGGRAAEKDDHVDKGCCRGCVVL</sequence>